<sequence>MKSFKDVKVGEIFCLDNGDQLIRISPLKSTSEKMTVNATLANNSNERFCIENDTETYTVEEFWELSVDCDE</sequence>
<gene>
    <name type="primary">y16K</name>
    <name type="synonym">ndd.1</name>
</gene>
<name>Y16K_BPT4</name>
<feature type="chain" id="PRO_0000165207" description="Uncharacterized 8.1 kDa protein in ndd-denB intergenic region">
    <location>
        <begin position="1"/>
        <end position="71"/>
    </location>
</feature>
<keyword id="KW-1185">Reference proteome</keyword>
<reference key="1">
    <citation type="journal article" date="2003" name="Microbiol. Mol. Biol. Rev.">
        <title>Bacteriophage T4 genome.</title>
        <authorList>
            <person name="Miller E.S."/>
            <person name="Kutter E."/>
            <person name="Mosig G."/>
            <person name="Arisaka F."/>
            <person name="Kunisawa T."/>
            <person name="Ruger W."/>
        </authorList>
    </citation>
    <scope>NUCLEOTIDE SEQUENCE [LARGE SCALE GENOMIC DNA]</scope>
</reference>
<accession>P39243</accession>
<proteinExistence type="predicted"/>
<organism>
    <name type="scientific">Enterobacteria phage T4</name>
    <name type="common">Bacteriophage T4</name>
    <dbReference type="NCBI Taxonomy" id="10665"/>
    <lineage>
        <taxon>Viruses</taxon>
        <taxon>Duplodnaviria</taxon>
        <taxon>Heunggongvirae</taxon>
        <taxon>Uroviricota</taxon>
        <taxon>Caudoviricetes</taxon>
        <taxon>Straboviridae</taxon>
        <taxon>Tevenvirinae</taxon>
        <taxon>Tequatrovirus</taxon>
    </lineage>
</organism>
<organismHost>
    <name type="scientific">Escherichia coli</name>
    <dbReference type="NCBI Taxonomy" id="562"/>
</organismHost>
<dbReference type="EMBL" id="AF158101">
    <property type="protein sequence ID" value="AAD42616.1"/>
    <property type="molecule type" value="Genomic_DNA"/>
</dbReference>
<dbReference type="RefSeq" id="NP_049880.1">
    <property type="nucleotide sequence ID" value="NC_000866.4"/>
</dbReference>
<dbReference type="SMR" id="P39243"/>
<dbReference type="GeneID" id="1258759"/>
<dbReference type="KEGG" id="vg:1258759"/>
<dbReference type="OrthoDB" id="20700at10239"/>
<dbReference type="Proteomes" id="UP000009087">
    <property type="component" value="Segment"/>
</dbReference>
<protein>
    <recommendedName>
        <fullName>Uncharacterized 8.1 kDa protein in ndd-denB intergenic region</fullName>
    </recommendedName>
</protein>